<name>RF2_RICBR</name>
<keyword id="KW-0963">Cytoplasm</keyword>
<keyword id="KW-0488">Methylation</keyword>
<keyword id="KW-0648">Protein biosynthesis</keyword>
<accession>Q1RIY5</accession>
<organism>
    <name type="scientific">Rickettsia bellii (strain RML369-C)</name>
    <dbReference type="NCBI Taxonomy" id="336407"/>
    <lineage>
        <taxon>Bacteria</taxon>
        <taxon>Pseudomonadati</taxon>
        <taxon>Pseudomonadota</taxon>
        <taxon>Alphaproteobacteria</taxon>
        <taxon>Rickettsiales</taxon>
        <taxon>Rickettsiaceae</taxon>
        <taxon>Rickettsieae</taxon>
        <taxon>Rickettsia</taxon>
        <taxon>belli group</taxon>
    </lineage>
</organism>
<gene>
    <name evidence="1" type="primary">prfB</name>
    <name type="ordered locus">RBE_0598</name>
</gene>
<sequence>MRAEIENYVKKIEQSLELLRRSLDVETSAARLAELEELAASPDLWNDQANAQKLLREKSNLEEQLGAYNKIRSNLKDALELEEMAEAENDLEIMQQVEKDLQSLSTIAAKFETECLFSGEADSNNCFLEINAGAGGTESHDWASIMMRMYLRFAERLGFKTEIINMINGEEAGIKSCTIRIIGRRAYGWLKTEAGVHRLVRISPFNAAGKRMTSFASSWVYPEIDDNIAITIEDKDLRIDTFRASGAGGQHVNTTDSAVRITHIPTGTVTQCQSDRSQHKNKAQAMKMLQAKLYELEMQKRTDSVNEQNAAKTDNSWGHQIRSYVLQPYQMVKDLRTDYETSDTKGVLDGDLEEFVSASLAMNAGSKK</sequence>
<comment type="function">
    <text evidence="1">Peptide chain release factor 2 directs the termination of translation in response to the peptide chain termination codons UGA and UAA.</text>
</comment>
<comment type="subcellular location">
    <subcellularLocation>
        <location evidence="1">Cytoplasm</location>
    </subcellularLocation>
</comment>
<comment type="PTM">
    <text evidence="1">Methylated by PrmC. Methylation increases the termination efficiency of RF2.</text>
</comment>
<comment type="similarity">
    <text evidence="1">Belongs to the prokaryotic/mitochondrial release factor family.</text>
</comment>
<feature type="chain" id="PRO_0000277909" description="Peptide chain release factor 2">
    <location>
        <begin position="1"/>
        <end position="368"/>
    </location>
</feature>
<feature type="modified residue" description="N5-methylglutamine" evidence="1">
    <location>
        <position position="250"/>
    </location>
</feature>
<proteinExistence type="inferred from homology"/>
<reference key="1">
    <citation type="journal article" date="2006" name="PLoS Genet.">
        <title>Genome sequence of Rickettsia bellii illuminates the role of amoebae in gene exchanges between intracellular pathogens.</title>
        <authorList>
            <person name="Ogata H."/>
            <person name="La Scola B."/>
            <person name="Audic S."/>
            <person name="Renesto P."/>
            <person name="Blanc G."/>
            <person name="Robert C."/>
            <person name="Fournier P.-E."/>
            <person name="Claverie J.-M."/>
            <person name="Raoult D."/>
        </authorList>
    </citation>
    <scope>NUCLEOTIDE SEQUENCE [LARGE SCALE GENOMIC DNA]</scope>
    <source>
        <strain>RML369-C</strain>
    </source>
</reference>
<evidence type="ECO:0000255" key="1">
    <source>
        <dbReference type="HAMAP-Rule" id="MF_00094"/>
    </source>
</evidence>
<protein>
    <recommendedName>
        <fullName evidence="1">Peptide chain release factor 2</fullName>
        <shortName evidence="1">RF-2</shortName>
    </recommendedName>
</protein>
<dbReference type="EMBL" id="CP000087">
    <property type="protein sequence ID" value="ABE04679.1"/>
    <property type="molecule type" value="Genomic_DNA"/>
</dbReference>
<dbReference type="SMR" id="Q1RIY5"/>
<dbReference type="KEGG" id="rbe:RBE_0598"/>
<dbReference type="eggNOG" id="COG1186">
    <property type="taxonomic scope" value="Bacteria"/>
</dbReference>
<dbReference type="HOGENOM" id="CLU_221951_1_0_5"/>
<dbReference type="OrthoDB" id="9806673at2"/>
<dbReference type="Proteomes" id="UP000001951">
    <property type="component" value="Chromosome"/>
</dbReference>
<dbReference type="GO" id="GO:0005737">
    <property type="term" value="C:cytoplasm"/>
    <property type="evidence" value="ECO:0007669"/>
    <property type="project" value="UniProtKB-SubCell"/>
</dbReference>
<dbReference type="GO" id="GO:0016149">
    <property type="term" value="F:translation release factor activity, codon specific"/>
    <property type="evidence" value="ECO:0007669"/>
    <property type="project" value="UniProtKB-UniRule"/>
</dbReference>
<dbReference type="FunFam" id="3.30.160.20:FF:000010">
    <property type="entry name" value="Peptide chain release factor 2"/>
    <property type="match status" value="1"/>
</dbReference>
<dbReference type="Gene3D" id="3.30.160.20">
    <property type="match status" value="1"/>
</dbReference>
<dbReference type="Gene3D" id="3.30.70.1660">
    <property type="match status" value="1"/>
</dbReference>
<dbReference type="Gene3D" id="1.20.58.410">
    <property type="entry name" value="Release factor"/>
    <property type="match status" value="1"/>
</dbReference>
<dbReference type="HAMAP" id="MF_00094">
    <property type="entry name" value="Rel_fac_2"/>
    <property type="match status" value="1"/>
</dbReference>
<dbReference type="InterPro" id="IPR005139">
    <property type="entry name" value="PCRF"/>
</dbReference>
<dbReference type="InterPro" id="IPR000352">
    <property type="entry name" value="Pep_chain_release_fac_I"/>
</dbReference>
<dbReference type="InterPro" id="IPR045853">
    <property type="entry name" value="Pep_chain_release_fac_I_sf"/>
</dbReference>
<dbReference type="InterPro" id="IPR004374">
    <property type="entry name" value="PrfB"/>
</dbReference>
<dbReference type="NCBIfam" id="TIGR00020">
    <property type="entry name" value="prfB"/>
    <property type="match status" value="1"/>
</dbReference>
<dbReference type="PANTHER" id="PTHR43116:SF3">
    <property type="entry name" value="CLASS I PEPTIDE CHAIN RELEASE FACTOR"/>
    <property type="match status" value="1"/>
</dbReference>
<dbReference type="PANTHER" id="PTHR43116">
    <property type="entry name" value="PEPTIDE CHAIN RELEASE FACTOR 2"/>
    <property type="match status" value="1"/>
</dbReference>
<dbReference type="Pfam" id="PF03462">
    <property type="entry name" value="PCRF"/>
    <property type="match status" value="1"/>
</dbReference>
<dbReference type="Pfam" id="PF00472">
    <property type="entry name" value="RF-1"/>
    <property type="match status" value="1"/>
</dbReference>
<dbReference type="SMART" id="SM00937">
    <property type="entry name" value="PCRF"/>
    <property type="match status" value="1"/>
</dbReference>
<dbReference type="SUPFAM" id="SSF75620">
    <property type="entry name" value="Release factor"/>
    <property type="match status" value="1"/>
</dbReference>
<dbReference type="PROSITE" id="PS00745">
    <property type="entry name" value="RF_PROK_I"/>
    <property type="match status" value="1"/>
</dbReference>